<proteinExistence type="inferred from homology"/>
<name>MDH_ECOLC</name>
<evidence type="ECO:0000255" key="1">
    <source>
        <dbReference type="HAMAP-Rule" id="MF_01516"/>
    </source>
</evidence>
<dbReference type="EC" id="1.1.1.37" evidence="1"/>
<dbReference type="EMBL" id="CP000946">
    <property type="protein sequence ID" value="ACA76147.1"/>
    <property type="molecule type" value="Genomic_DNA"/>
</dbReference>
<dbReference type="RefSeq" id="WP_012304831.1">
    <property type="nucleotide sequence ID" value="NC_010468.1"/>
</dbReference>
<dbReference type="SMR" id="B1IQP3"/>
<dbReference type="KEGG" id="ecl:EcolC_0470"/>
<dbReference type="HOGENOM" id="CLU_047181_0_1_6"/>
<dbReference type="GO" id="GO:0005737">
    <property type="term" value="C:cytoplasm"/>
    <property type="evidence" value="ECO:0007669"/>
    <property type="project" value="TreeGrafter"/>
</dbReference>
<dbReference type="GO" id="GO:0030060">
    <property type="term" value="F:L-malate dehydrogenase (NAD+) activity"/>
    <property type="evidence" value="ECO:0007669"/>
    <property type="project" value="UniProtKB-UniRule"/>
</dbReference>
<dbReference type="GO" id="GO:0006108">
    <property type="term" value="P:malate metabolic process"/>
    <property type="evidence" value="ECO:0007669"/>
    <property type="project" value="InterPro"/>
</dbReference>
<dbReference type="GO" id="GO:0006099">
    <property type="term" value="P:tricarboxylic acid cycle"/>
    <property type="evidence" value="ECO:0007669"/>
    <property type="project" value="UniProtKB-UniRule"/>
</dbReference>
<dbReference type="CDD" id="cd01337">
    <property type="entry name" value="MDH_glyoxysomal_mitochondrial"/>
    <property type="match status" value="1"/>
</dbReference>
<dbReference type="FunFam" id="3.40.50.720:FF:000017">
    <property type="entry name" value="Malate dehydrogenase"/>
    <property type="match status" value="1"/>
</dbReference>
<dbReference type="FunFam" id="3.90.110.10:FF:000001">
    <property type="entry name" value="Malate dehydrogenase"/>
    <property type="match status" value="1"/>
</dbReference>
<dbReference type="Gene3D" id="3.90.110.10">
    <property type="entry name" value="Lactate dehydrogenase/glycoside hydrolase, family 4, C-terminal"/>
    <property type="match status" value="1"/>
</dbReference>
<dbReference type="Gene3D" id="3.40.50.720">
    <property type="entry name" value="NAD(P)-binding Rossmann-like Domain"/>
    <property type="match status" value="1"/>
</dbReference>
<dbReference type="HAMAP" id="MF_01516">
    <property type="entry name" value="Malate_dehydrog_1"/>
    <property type="match status" value="1"/>
</dbReference>
<dbReference type="InterPro" id="IPR001557">
    <property type="entry name" value="L-lactate/malate_DH"/>
</dbReference>
<dbReference type="InterPro" id="IPR022383">
    <property type="entry name" value="Lactate/malate_DH_C"/>
</dbReference>
<dbReference type="InterPro" id="IPR001236">
    <property type="entry name" value="Lactate/malate_DH_N"/>
</dbReference>
<dbReference type="InterPro" id="IPR015955">
    <property type="entry name" value="Lactate_DH/Glyco_Ohase_4_C"/>
</dbReference>
<dbReference type="InterPro" id="IPR001252">
    <property type="entry name" value="Malate_DH_AS"/>
</dbReference>
<dbReference type="InterPro" id="IPR010097">
    <property type="entry name" value="Malate_DH_type1"/>
</dbReference>
<dbReference type="InterPro" id="IPR023958">
    <property type="entry name" value="Malate_DH_type1_bac"/>
</dbReference>
<dbReference type="InterPro" id="IPR036291">
    <property type="entry name" value="NAD(P)-bd_dom_sf"/>
</dbReference>
<dbReference type="NCBIfam" id="TIGR01772">
    <property type="entry name" value="MDH_euk_gproteo"/>
    <property type="match status" value="1"/>
</dbReference>
<dbReference type="PANTHER" id="PTHR11540">
    <property type="entry name" value="MALATE AND LACTATE DEHYDROGENASE"/>
    <property type="match status" value="1"/>
</dbReference>
<dbReference type="PANTHER" id="PTHR11540:SF16">
    <property type="entry name" value="MALATE DEHYDROGENASE, MITOCHONDRIAL"/>
    <property type="match status" value="1"/>
</dbReference>
<dbReference type="Pfam" id="PF02866">
    <property type="entry name" value="Ldh_1_C"/>
    <property type="match status" value="1"/>
</dbReference>
<dbReference type="Pfam" id="PF00056">
    <property type="entry name" value="Ldh_1_N"/>
    <property type="match status" value="1"/>
</dbReference>
<dbReference type="PIRSF" id="PIRSF000102">
    <property type="entry name" value="Lac_mal_DH"/>
    <property type="match status" value="1"/>
</dbReference>
<dbReference type="SUPFAM" id="SSF56327">
    <property type="entry name" value="LDH C-terminal domain-like"/>
    <property type="match status" value="1"/>
</dbReference>
<dbReference type="SUPFAM" id="SSF51735">
    <property type="entry name" value="NAD(P)-binding Rossmann-fold domains"/>
    <property type="match status" value="1"/>
</dbReference>
<dbReference type="PROSITE" id="PS00068">
    <property type="entry name" value="MDH"/>
    <property type="match status" value="1"/>
</dbReference>
<keyword id="KW-0520">NAD</keyword>
<keyword id="KW-0560">Oxidoreductase</keyword>
<keyword id="KW-0816">Tricarboxylic acid cycle</keyword>
<feature type="chain" id="PRO_1000087534" description="Malate dehydrogenase">
    <location>
        <begin position="1"/>
        <end position="312"/>
    </location>
</feature>
<feature type="active site" description="Proton acceptor" evidence="1">
    <location>
        <position position="177"/>
    </location>
</feature>
<feature type="binding site" evidence="1">
    <location>
        <begin position="7"/>
        <end position="13"/>
    </location>
    <ligand>
        <name>NAD(+)</name>
        <dbReference type="ChEBI" id="CHEBI:57540"/>
    </ligand>
</feature>
<feature type="binding site" evidence="1">
    <location>
        <position position="34"/>
    </location>
    <ligand>
        <name>NAD(+)</name>
        <dbReference type="ChEBI" id="CHEBI:57540"/>
    </ligand>
</feature>
<feature type="binding site" evidence="1">
    <location>
        <position position="81"/>
    </location>
    <ligand>
        <name>substrate</name>
    </ligand>
</feature>
<feature type="binding site" evidence="1">
    <location>
        <position position="87"/>
    </location>
    <ligand>
        <name>substrate</name>
    </ligand>
</feature>
<feature type="binding site" evidence="1">
    <location>
        <position position="94"/>
    </location>
    <ligand>
        <name>NAD(+)</name>
        <dbReference type="ChEBI" id="CHEBI:57540"/>
    </ligand>
</feature>
<feature type="binding site" evidence="1">
    <location>
        <begin position="117"/>
        <end position="119"/>
    </location>
    <ligand>
        <name>NAD(+)</name>
        <dbReference type="ChEBI" id="CHEBI:57540"/>
    </ligand>
</feature>
<feature type="binding site" evidence="1">
    <location>
        <position position="119"/>
    </location>
    <ligand>
        <name>substrate</name>
    </ligand>
</feature>
<feature type="binding site" evidence="1">
    <location>
        <position position="153"/>
    </location>
    <ligand>
        <name>substrate</name>
    </ligand>
</feature>
<feature type="binding site" evidence="1">
    <location>
        <position position="227"/>
    </location>
    <ligand>
        <name>NAD(+)</name>
        <dbReference type="ChEBI" id="CHEBI:57540"/>
    </ligand>
</feature>
<gene>
    <name evidence="1" type="primary">mdh</name>
    <name type="ordered locus">EcolC_0470</name>
</gene>
<sequence>MKVAVLGAAGGIGQALALLLKTQLPSGSELSLYDIAPVTPGVAVDLSHIPTAVKIKGFSGEDATSALEGADVVLISAGVARKPGMDRSDLFNVNAGIVKNLVQQVAKTCPKACIGIITNPVNTTVAIAAEVLKKAGVYDKNKLFGVTTLDIIRSNTFVAELKGKQPGEVEVPVIGGHSGVTILPLLSQVPGVSFTEQEVADLTKRIQNAGTEVVEAKAGGGSATLSMGQAAARFGLSLVRALQGEQGVVECAYVEGDGQYARFFSQPLLLGKNGVEERKSIGTLSAFEQNALEGMLDTLKKDIALGEEFVNK</sequence>
<protein>
    <recommendedName>
        <fullName evidence="1">Malate dehydrogenase</fullName>
        <ecNumber evidence="1">1.1.1.37</ecNumber>
    </recommendedName>
</protein>
<organism>
    <name type="scientific">Escherichia coli (strain ATCC 8739 / DSM 1576 / NBRC 3972 / NCIMB 8545 / WDCM 00012 / Crooks)</name>
    <dbReference type="NCBI Taxonomy" id="481805"/>
    <lineage>
        <taxon>Bacteria</taxon>
        <taxon>Pseudomonadati</taxon>
        <taxon>Pseudomonadota</taxon>
        <taxon>Gammaproteobacteria</taxon>
        <taxon>Enterobacterales</taxon>
        <taxon>Enterobacteriaceae</taxon>
        <taxon>Escherichia</taxon>
    </lineage>
</organism>
<accession>B1IQP3</accession>
<reference key="1">
    <citation type="submission" date="2008-02" db="EMBL/GenBank/DDBJ databases">
        <title>Complete sequence of Escherichia coli C str. ATCC 8739.</title>
        <authorList>
            <person name="Copeland A."/>
            <person name="Lucas S."/>
            <person name="Lapidus A."/>
            <person name="Glavina del Rio T."/>
            <person name="Dalin E."/>
            <person name="Tice H."/>
            <person name="Bruce D."/>
            <person name="Goodwin L."/>
            <person name="Pitluck S."/>
            <person name="Kiss H."/>
            <person name="Brettin T."/>
            <person name="Detter J.C."/>
            <person name="Han C."/>
            <person name="Kuske C.R."/>
            <person name="Schmutz J."/>
            <person name="Larimer F."/>
            <person name="Land M."/>
            <person name="Hauser L."/>
            <person name="Kyrpides N."/>
            <person name="Mikhailova N."/>
            <person name="Ingram L."/>
            <person name="Richardson P."/>
        </authorList>
    </citation>
    <scope>NUCLEOTIDE SEQUENCE [LARGE SCALE GENOMIC DNA]</scope>
    <source>
        <strain>ATCC 8739 / DSM 1576 / NBRC 3972 / NCIMB 8545 / WDCM 00012 / Crooks</strain>
    </source>
</reference>
<comment type="function">
    <text evidence="1">Catalyzes the reversible oxidation of malate to oxaloacetate.</text>
</comment>
<comment type="catalytic activity">
    <reaction evidence="1">
        <text>(S)-malate + NAD(+) = oxaloacetate + NADH + H(+)</text>
        <dbReference type="Rhea" id="RHEA:21432"/>
        <dbReference type="ChEBI" id="CHEBI:15378"/>
        <dbReference type="ChEBI" id="CHEBI:15589"/>
        <dbReference type="ChEBI" id="CHEBI:16452"/>
        <dbReference type="ChEBI" id="CHEBI:57540"/>
        <dbReference type="ChEBI" id="CHEBI:57945"/>
        <dbReference type="EC" id="1.1.1.37"/>
    </reaction>
</comment>
<comment type="subunit">
    <text evidence="1">Homodimer.</text>
</comment>
<comment type="similarity">
    <text evidence="1">Belongs to the LDH/MDH superfamily. MDH type 1 family.</text>
</comment>